<accession>Q0A7F4</accession>
<comment type="function">
    <text evidence="1">Bifunctional serine/threonine kinase and phosphorylase involved in the regulation of the phosphoenolpyruvate synthase (PEPS) by catalyzing its phosphorylation/dephosphorylation.</text>
</comment>
<comment type="catalytic activity">
    <reaction evidence="1">
        <text>[pyruvate, water dikinase] + ADP = [pyruvate, water dikinase]-phosphate + AMP + H(+)</text>
        <dbReference type="Rhea" id="RHEA:46020"/>
        <dbReference type="Rhea" id="RHEA-COMP:11425"/>
        <dbReference type="Rhea" id="RHEA-COMP:11426"/>
        <dbReference type="ChEBI" id="CHEBI:15378"/>
        <dbReference type="ChEBI" id="CHEBI:43176"/>
        <dbReference type="ChEBI" id="CHEBI:68546"/>
        <dbReference type="ChEBI" id="CHEBI:456215"/>
        <dbReference type="ChEBI" id="CHEBI:456216"/>
        <dbReference type="EC" id="2.7.11.33"/>
    </reaction>
</comment>
<comment type="catalytic activity">
    <reaction evidence="1">
        <text>[pyruvate, water dikinase]-phosphate + phosphate + H(+) = [pyruvate, water dikinase] + diphosphate</text>
        <dbReference type="Rhea" id="RHEA:48580"/>
        <dbReference type="Rhea" id="RHEA-COMP:11425"/>
        <dbReference type="Rhea" id="RHEA-COMP:11426"/>
        <dbReference type="ChEBI" id="CHEBI:15378"/>
        <dbReference type="ChEBI" id="CHEBI:33019"/>
        <dbReference type="ChEBI" id="CHEBI:43176"/>
        <dbReference type="ChEBI" id="CHEBI:43474"/>
        <dbReference type="ChEBI" id="CHEBI:68546"/>
        <dbReference type="EC" id="2.7.4.28"/>
    </reaction>
</comment>
<comment type="similarity">
    <text evidence="1">Belongs to the pyruvate, phosphate/water dikinase regulatory protein family. PSRP subfamily.</text>
</comment>
<gene>
    <name type="ordered locus">Mlg_1889</name>
</gene>
<sequence length="274" mass="31064">MTEARRSVYFISDRTGITAEALGHSLLTQFSIDFEQRTIPFVDTEEKAAQVVEQLNVASQRSGLRPIVFSTVVDAEVRRVLQTTDAVLFDFFDTFIAPLEQELRMPSSHVIGRSHGVVDNNMYDVRIDAMNYALNHDDGAVTHHYSRADVILTAVSRSGKTPTCIYLALQYGIYAANYPLTQDDLNRGKLPRKLVEHKRKLYGLTINVDRLQTIRSGRLPNSDYASLRQCSYEVARAEALFRSEGIPYVNTTTMSIEEIATKIIHEAKLERRLY</sequence>
<feature type="chain" id="PRO_0000316632" description="Putative phosphoenolpyruvate synthase regulatory protein">
    <location>
        <begin position="1"/>
        <end position="274"/>
    </location>
</feature>
<feature type="binding site" evidence="1">
    <location>
        <begin position="154"/>
        <end position="161"/>
    </location>
    <ligand>
        <name>ADP</name>
        <dbReference type="ChEBI" id="CHEBI:456216"/>
    </ligand>
</feature>
<name>PSRP_ALKEH</name>
<organism>
    <name type="scientific">Alkalilimnicola ehrlichii (strain ATCC BAA-1101 / DSM 17681 / MLHE-1)</name>
    <dbReference type="NCBI Taxonomy" id="187272"/>
    <lineage>
        <taxon>Bacteria</taxon>
        <taxon>Pseudomonadati</taxon>
        <taxon>Pseudomonadota</taxon>
        <taxon>Gammaproteobacteria</taxon>
        <taxon>Chromatiales</taxon>
        <taxon>Ectothiorhodospiraceae</taxon>
        <taxon>Alkalilimnicola</taxon>
    </lineage>
</organism>
<keyword id="KW-0418">Kinase</keyword>
<keyword id="KW-0547">Nucleotide-binding</keyword>
<keyword id="KW-1185">Reference proteome</keyword>
<keyword id="KW-0723">Serine/threonine-protein kinase</keyword>
<keyword id="KW-0808">Transferase</keyword>
<evidence type="ECO:0000255" key="1">
    <source>
        <dbReference type="HAMAP-Rule" id="MF_01062"/>
    </source>
</evidence>
<dbReference type="EC" id="2.7.11.33" evidence="1"/>
<dbReference type="EC" id="2.7.4.28" evidence="1"/>
<dbReference type="EMBL" id="CP000453">
    <property type="protein sequence ID" value="ABI57233.1"/>
    <property type="molecule type" value="Genomic_DNA"/>
</dbReference>
<dbReference type="RefSeq" id="WP_011629627.1">
    <property type="nucleotide sequence ID" value="NC_008340.1"/>
</dbReference>
<dbReference type="SMR" id="Q0A7F4"/>
<dbReference type="KEGG" id="aeh:Mlg_1889"/>
<dbReference type="eggNOG" id="COG1806">
    <property type="taxonomic scope" value="Bacteria"/>
</dbReference>
<dbReference type="HOGENOM" id="CLU_046206_1_0_6"/>
<dbReference type="OrthoDB" id="9782201at2"/>
<dbReference type="Proteomes" id="UP000001962">
    <property type="component" value="Chromosome"/>
</dbReference>
<dbReference type="GO" id="GO:0043531">
    <property type="term" value="F:ADP binding"/>
    <property type="evidence" value="ECO:0007669"/>
    <property type="project" value="UniProtKB-UniRule"/>
</dbReference>
<dbReference type="GO" id="GO:0005524">
    <property type="term" value="F:ATP binding"/>
    <property type="evidence" value="ECO:0007669"/>
    <property type="project" value="InterPro"/>
</dbReference>
<dbReference type="GO" id="GO:0016776">
    <property type="term" value="F:phosphotransferase activity, phosphate group as acceptor"/>
    <property type="evidence" value="ECO:0007669"/>
    <property type="project" value="UniProtKB-UniRule"/>
</dbReference>
<dbReference type="GO" id="GO:0004674">
    <property type="term" value="F:protein serine/threonine kinase activity"/>
    <property type="evidence" value="ECO:0007669"/>
    <property type="project" value="UniProtKB-UniRule"/>
</dbReference>
<dbReference type="HAMAP" id="MF_01062">
    <property type="entry name" value="PSRP"/>
    <property type="match status" value="1"/>
</dbReference>
<dbReference type="InterPro" id="IPR005177">
    <property type="entry name" value="Kinase-pyrophosphorylase"/>
</dbReference>
<dbReference type="InterPro" id="IPR026530">
    <property type="entry name" value="PSRP"/>
</dbReference>
<dbReference type="NCBIfam" id="NF003742">
    <property type="entry name" value="PRK05339.1"/>
    <property type="match status" value="1"/>
</dbReference>
<dbReference type="PANTHER" id="PTHR31756">
    <property type="entry name" value="PYRUVATE, PHOSPHATE DIKINASE REGULATORY PROTEIN 1, CHLOROPLASTIC"/>
    <property type="match status" value="1"/>
</dbReference>
<dbReference type="PANTHER" id="PTHR31756:SF3">
    <property type="entry name" value="PYRUVATE, PHOSPHATE DIKINASE REGULATORY PROTEIN 1, CHLOROPLASTIC"/>
    <property type="match status" value="1"/>
</dbReference>
<dbReference type="Pfam" id="PF03618">
    <property type="entry name" value="Kinase-PPPase"/>
    <property type="match status" value="1"/>
</dbReference>
<protein>
    <recommendedName>
        <fullName evidence="1">Putative phosphoenolpyruvate synthase regulatory protein</fullName>
        <shortName evidence="1">PEP synthase regulatory protein</shortName>
        <shortName evidence="1">PSRP</shortName>
        <ecNumber evidence="1">2.7.11.33</ecNumber>
        <ecNumber evidence="1">2.7.4.28</ecNumber>
    </recommendedName>
    <alternativeName>
        <fullName evidence="1">Pyruvate, water dikinase regulatory protein</fullName>
    </alternativeName>
</protein>
<proteinExistence type="inferred from homology"/>
<reference key="1">
    <citation type="submission" date="2006-08" db="EMBL/GenBank/DDBJ databases">
        <title>Complete sequence of Alkalilimnicola ehrilichei MLHE-1.</title>
        <authorList>
            <person name="Copeland A."/>
            <person name="Lucas S."/>
            <person name="Lapidus A."/>
            <person name="Barry K."/>
            <person name="Detter J.C."/>
            <person name="Glavina del Rio T."/>
            <person name="Hammon N."/>
            <person name="Israni S."/>
            <person name="Dalin E."/>
            <person name="Tice H."/>
            <person name="Pitluck S."/>
            <person name="Sims D."/>
            <person name="Brettin T."/>
            <person name="Bruce D."/>
            <person name="Han C."/>
            <person name="Tapia R."/>
            <person name="Gilna P."/>
            <person name="Schmutz J."/>
            <person name="Larimer F."/>
            <person name="Land M."/>
            <person name="Hauser L."/>
            <person name="Kyrpides N."/>
            <person name="Mikhailova N."/>
            <person name="Oremland R.S."/>
            <person name="Hoeft S.E."/>
            <person name="Switzer-Blum J."/>
            <person name="Kulp T."/>
            <person name="King G."/>
            <person name="Tabita R."/>
            <person name="Witte B."/>
            <person name="Santini J.M."/>
            <person name="Basu P."/>
            <person name="Hollibaugh J.T."/>
            <person name="Xie G."/>
            <person name="Stolz J.F."/>
            <person name="Richardson P."/>
        </authorList>
    </citation>
    <scope>NUCLEOTIDE SEQUENCE [LARGE SCALE GENOMIC DNA]</scope>
    <source>
        <strain>ATCC BAA-1101 / DSM 17681 / MLHE-1</strain>
    </source>
</reference>